<proteinExistence type="inferred from homology"/>
<organism>
    <name type="scientific">Streptomyces coelicolor (strain ATCC BAA-471 / A3(2) / M145)</name>
    <dbReference type="NCBI Taxonomy" id="100226"/>
    <lineage>
        <taxon>Bacteria</taxon>
        <taxon>Bacillati</taxon>
        <taxon>Actinomycetota</taxon>
        <taxon>Actinomycetes</taxon>
        <taxon>Kitasatosporales</taxon>
        <taxon>Streptomycetaceae</taxon>
        <taxon>Streptomyces</taxon>
        <taxon>Streptomyces albidoflavus group</taxon>
    </lineage>
</organism>
<feature type="chain" id="PRO_0000119447" description="GTP cyclohydrolase 1">
    <location>
        <begin position="1"/>
        <end position="201"/>
    </location>
</feature>
<feature type="binding site" evidence="1">
    <location>
        <position position="90"/>
    </location>
    <ligand>
        <name>Zn(2+)</name>
        <dbReference type="ChEBI" id="CHEBI:29105"/>
    </ligand>
</feature>
<feature type="binding site" evidence="1">
    <location>
        <position position="93"/>
    </location>
    <ligand>
        <name>Zn(2+)</name>
        <dbReference type="ChEBI" id="CHEBI:29105"/>
    </ligand>
</feature>
<feature type="binding site" evidence="1">
    <location>
        <position position="163"/>
    </location>
    <ligand>
        <name>Zn(2+)</name>
        <dbReference type="ChEBI" id="CHEBI:29105"/>
    </ligand>
</feature>
<name>GCH1_STRCO</name>
<gene>
    <name type="primary">folE</name>
    <name type="ordered locus">SCO3403</name>
    <name type="ORF">SCE9.10c</name>
</gene>
<comment type="catalytic activity">
    <reaction>
        <text>GTP + H2O = 7,8-dihydroneopterin 3'-triphosphate + formate + H(+)</text>
        <dbReference type="Rhea" id="RHEA:17473"/>
        <dbReference type="ChEBI" id="CHEBI:15377"/>
        <dbReference type="ChEBI" id="CHEBI:15378"/>
        <dbReference type="ChEBI" id="CHEBI:15740"/>
        <dbReference type="ChEBI" id="CHEBI:37565"/>
        <dbReference type="ChEBI" id="CHEBI:58462"/>
        <dbReference type="EC" id="3.5.4.16"/>
    </reaction>
</comment>
<comment type="pathway">
    <text>Cofactor biosynthesis; 7,8-dihydroneopterin triphosphate biosynthesis; 7,8-dihydroneopterin triphosphate from GTP: step 1/1.</text>
</comment>
<comment type="subunit">
    <text evidence="1">Toroid-shaped homodecamer, composed of two pentamers of five dimers.</text>
</comment>
<comment type="similarity">
    <text evidence="2">Belongs to the GTP cyclohydrolase I family.</text>
</comment>
<accession>Q9X8I3</accession>
<protein>
    <recommendedName>
        <fullName>GTP cyclohydrolase 1</fullName>
        <ecNumber>3.5.4.16</ecNumber>
    </recommendedName>
    <alternativeName>
        <fullName>GTP cyclohydrolase I</fullName>
        <shortName>GTP-CH-I</shortName>
    </alternativeName>
</protein>
<dbReference type="EC" id="3.5.4.16"/>
<dbReference type="EMBL" id="AL939116">
    <property type="protein sequence ID" value="CAB42756.1"/>
    <property type="molecule type" value="Genomic_DNA"/>
</dbReference>
<dbReference type="PIR" id="T36329">
    <property type="entry name" value="T36329"/>
</dbReference>
<dbReference type="RefSeq" id="NP_627609.1">
    <property type="nucleotide sequence ID" value="NC_003888.3"/>
</dbReference>
<dbReference type="RefSeq" id="WP_003975430.1">
    <property type="nucleotide sequence ID" value="NZ_VNID01000023.1"/>
</dbReference>
<dbReference type="SMR" id="Q9X8I3"/>
<dbReference type="FunCoup" id="Q9X8I3">
    <property type="interactions" value="225"/>
</dbReference>
<dbReference type="STRING" id="100226.gene:17761025"/>
<dbReference type="PaxDb" id="100226-SCO3403"/>
<dbReference type="GeneID" id="91385554"/>
<dbReference type="KEGG" id="sco:SCO3403"/>
<dbReference type="PATRIC" id="fig|100226.15.peg.3466"/>
<dbReference type="eggNOG" id="COG0302">
    <property type="taxonomic scope" value="Bacteria"/>
</dbReference>
<dbReference type="HOGENOM" id="CLU_049768_3_3_11"/>
<dbReference type="InParanoid" id="Q9X8I3"/>
<dbReference type="OrthoDB" id="9801207at2"/>
<dbReference type="PhylomeDB" id="Q9X8I3"/>
<dbReference type="UniPathway" id="UPA00848">
    <property type="reaction ID" value="UER00151"/>
</dbReference>
<dbReference type="Proteomes" id="UP000001973">
    <property type="component" value="Chromosome"/>
</dbReference>
<dbReference type="GO" id="GO:0005737">
    <property type="term" value="C:cytoplasm"/>
    <property type="evidence" value="ECO:0000318"/>
    <property type="project" value="GO_Central"/>
</dbReference>
<dbReference type="GO" id="GO:0005525">
    <property type="term" value="F:GTP binding"/>
    <property type="evidence" value="ECO:0000318"/>
    <property type="project" value="GO_Central"/>
</dbReference>
<dbReference type="GO" id="GO:0003934">
    <property type="term" value="F:GTP cyclohydrolase I activity"/>
    <property type="evidence" value="ECO:0000318"/>
    <property type="project" value="GO_Central"/>
</dbReference>
<dbReference type="GO" id="GO:0008270">
    <property type="term" value="F:zinc ion binding"/>
    <property type="evidence" value="ECO:0000318"/>
    <property type="project" value="GO_Central"/>
</dbReference>
<dbReference type="GO" id="GO:0006730">
    <property type="term" value="P:one-carbon metabolic process"/>
    <property type="evidence" value="ECO:0007669"/>
    <property type="project" value="UniProtKB-UniRule"/>
</dbReference>
<dbReference type="GO" id="GO:0006729">
    <property type="term" value="P:tetrahydrobiopterin biosynthetic process"/>
    <property type="evidence" value="ECO:0000318"/>
    <property type="project" value="GO_Central"/>
</dbReference>
<dbReference type="GO" id="GO:0046654">
    <property type="term" value="P:tetrahydrofolate biosynthetic process"/>
    <property type="evidence" value="ECO:0007669"/>
    <property type="project" value="UniProtKB-UniRule"/>
</dbReference>
<dbReference type="FunFam" id="1.10.286.10:FF:000001">
    <property type="entry name" value="GTP cyclohydrolase 1"/>
    <property type="match status" value="1"/>
</dbReference>
<dbReference type="FunFam" id="3.30.1130.10:FF:000001">
    <property type="entry name" value="GTP cyclohydrolase 1"/>
    <property type="match status" value="1"/>
</dbReference>
<dbReference type="Gene3D" id="1.10.286.10">
    <property type="match status" value="1"/>
</dbReference>
<dbReference type="Gene3D" id="3.30.1130.10">
    <property type="match status" value="1"/>
</dbReference>
<dbReference type="HAMAP" id="MF_00223">
    <property type="entry name" value="FolE"/>
    <property type="match status" value="1"/>
</dbReference>
<dbReference type="InterPro" id="IPR043133">
    <property type="entry name" value="GTP-CH-I_C/QueF"/>
</dbReference>
<dbReference type="InterPro" id="IPR043134">
    <property type="entry name" value="GTP-CH-I_N"/>
</dbReference>
<dbReference type="InterPro" id="IPR001474">
    <property type="entry name" value="GTP_CycHdrlase_I"/>
</dbReference>
<dbReference type="InterPro" id="IPR018234">
    <property type="entry name" value="GTP_CycHdrlase_I_CS"/>
</dbReference>
<dbReference type="InterPro" id="IPR020602">
    <property type="entry name" value="GTP_CycHdrlase_I_dom"/>
</dbReference>
<dbReference type="NCBIfam" id="TIGR00063">
    <property type="entry name" value="folE"/>
    <property type="match status" value="1"/>
</dbReference>
<dbReference type="NCBIfam" id="NF006825">
    <property type="entry name" value="PRK09347.1-2"/>
    <property type="match status" value="1"/>
</dbReference>
<dbReference type="NCBIfam" id="NF006826">
    <property type="entry name" value="PRK09347.1-3"/>
    <property type="match status" value="1"/>
</dbReference>
<dbReference type="PANTHER" id="PTHR11109:SF7">
    <property type="entry name" value="GTP CYCLOHYDROLASE 1"/>
    <property type="match status" value="1"/>
</dbReference>
<dbReference type="PANTHER" id="PTHR11109">
    <property type="entry name" value="GTP CYCLOHYDROLASE I"/>
    <property type="match status" value="1"/>
</dbReference>
<dbReference type="Pfam" id="PF01227">
    <property type="entry name" value="GTP_cyclohydroI"/>
    <property type="match status" value="1"/>
</dbReference>
<dbReference type="SUPFAM" id="SSF55620">
    <property type="entry name" value="Tetrahydrobiopterin biosynthesis enzymes-like"/>
    <property type="match status" value="1"/>
</dbReference>
<dbReference type="PROSITE" id="PS00859">
    <property type="entry name" value="GTP_CYCLOHYDROL_1_1"/>
    <property type="match status" value="1"/>
</dbReference>
<dbReference type="PROSITE" id="PS00860">
    <property type="entry name" value="GTP_CYCLOHYDROL_1_2"/>
    <property type="match status" value="1"/>
</dbReference>
<reference key="1">
    <citation type="journal article" date="2002" name="Nature">
        <title>Complete genome sequence of the model actinomycete Streptomyces coelicolor A3(2).</title>
        <authorList>
            <person name="Bentley S.D."/>
            <person name="Chater K.F."/>
            <person name="Cerdeno-Tarraga A.-M."/>
            <person name="Challis G.L."/>
            <person name="Thomson N.R."/>
            <person name="James K.D."/>
            <person name="Harris D.E."/>
            <person name="Quail M.A."/>
            <person name="Kieser H."/>
            <person name="Harper D."/>
            <person name="Bateman A."/>
            <person name="Brown S."/>
            <person name="Chandra G."/>
            <person name="Chen C.W."/>
            <person name="Collins M."/>
            <person name="Cronin A."/>
            <person name="Fraser A."/>
            <person name="Goble A."/>
            <person name="Hidalgo J."/>
            <person name="Hornsby T."/>
            <person name="Howarth S."/>
            <person name="Huang C.-H."/>
            <person name="Kieser T."/>
            <person name="Larke L."/>
            <person name="Murphy L.D."/>
            <person name="Oliver K."/>
            <person name="O'Neil S."/>
            <person name="Rabbinowitsch E."/>
            <person name="Rajandream M.A."/>
            <person name="Rutherford K.M."/>
            <person name="Rutter S."/>
            <person name="Seeger K."/>
            <person name="Saunders D."/>
            <person name="Sharp S."/>
            <person name="Squares R."/>
            <person name="Squares S."/>
            <person name="Taylor K."/>
            <person name="Warren T."/>
            <person name="Wietzorrek A."/>
            <person name="Woodward J.R."/>
            <person name="Barrell B.G."/>
            <person name="Parkhill J."/>
            <person name="Hopwood D.A."/>
        </authorList>
    </citation>
    <scope>NUCLEOTIDE SEQUENCE [LARGE SCALE GENOMIC DNA]</scope>
    <source>
        <strain>ATCC BAA-471 / A3(2) / M145</strain>
    </source>
</reference>
<sequence length="201" mass="22415">MTDPVTLDGEGQIGEFDEKRAENAVRELLIAVGEDPDREGLRETPARVARAYREIFAGLWQEPEDVLTTTFDLGHDEMVLVKDIEVFSTCEHHLVPFRGVAHVGYIPSTSGKITGLSKLARLVDVYARRPQVQERLTTQIADSLMEILEPRGVIVVVECEHMCMSMRGIRKPGAKTLTSAVRGQLRDVATRNEAMSLIMAR</sequence>
<evidence type="ECO:0000250" key="1"/>
<evidence type="ECO:0000305" key="2"/>
<keyword id="KW-0342">GTP-binding</keyword>
<keyword id="KW-0378">Hydrolase</keyword>
<keyword id="KW-0479">Metal-binding</keyword>
<keyword id="KW-0547">Nucleotide-binding</keyword>
<keyword id="KW-0554">One-carbon metabolism</keyword>
<keyword id="KW-1185">Reference proteome</keyword>
<keyword id="KW-0862">Zinc</keyword>